<keyword id="KW-0046">Antibiotic resistance</keyword>
<keyword id="KW-0997">Cell inner membrane</keyword>
<keyword id="KW-1003">Cell membrane</keyword>
<keyword id="KW-0133">Cell shape</keyword>
<keyword id="KW-0961">Cell wall biogenesis/degradation</keyword>
<keyword id="KW-0378">Hydrolase</keyword>
<keyword id="KW-0472">Membrane</keyword>
<keyword id="KW-0573">Peptidoglycan synthesis</keyword>
<keyword id="KW-1185">Reference proteome</keyword>
<keyword id="KW-0812">Transmembrane</keyword>
<keyword id="KW-1133">Transmembrane helix</keyword>
<organism>
    <name type="scientific">Thermosipho africanus (strain TCF52B)</name>
    <dbReference type="NCBI Taxonomy" id="484019"/>
    <lineage>
        <taxon>Bacteria</taxon>
        <taxon>Thermotogati</taxon>
        <taxon>Thermotogota</taxon>
        <taxon>Thermotogae</taxon>
        <taxon>Thermotogales</taxon>
        <taxon>Fervidobacteriaceae</taxon>
        <taxon>Thermosipho</taxon>
    </lineage>
</organism>
<name>UPPP_THEAB</name>
<protein>
    <recommendedName>
        <fullName evidence="1">Undecaprenyl-diphosphatase</fullName>
        <ecNumber evidence="1">3.6.1.27</ecNumber>
    </recommendedName>
    <alternativeName>
        <fullName evidence="1">Bacitracin resistance protein</fullName>
    </alternativeName>
    <alternativeName>
        <fullName evidence="1">Undecaprenyl pyrophosphate phosphatase</fullName>
    </alternativeName>
</protein>
<gene>
    <name evidence="1" type="primary">uppP</name>
    <name type="ordered locus">THA_444</name>
</gene>
<dbReference type="EC" id="3.6.1.27" evidence="1"/>
<dbReference type="EMBL" id="CP001185">
    <property type="protein sequence ID" value="ACJ74935.1"/>
    <property type="molecule type" value="Genomic_DNA"/>
</dbReference>
<dbReference type="RefSeq" id="WP_012579584.1">
    <property type="nucleotide sequence ID" value="NC_011653.1"/>
</dbReference>
<dbReference type="SMR" id="B7IFS1"/>
<dbReference type="STRING" id="484019.THA_444"/>
<dbReference type="KEGG" id="taf:THA_444"/>
<dbReference type="eggNOG" id="COG1968">
    <property type="taxonomic scope" value="Bacteria"/>
</dbReference>
<dbReference type="HOGENOM" id="CLU_060296_1_2_0"/>
<dbReference type="OrthoDB" id="9808289at2"/>
<dbReference type="Proteomes" id="UP000002453">
    <property type="component" value="Chromosome"/>
</dbReference>
<dbReference type="GO" id="GO:0005886">
    <property type="term" value="C:plasma membrane"/>
    <property type="evidence" value="ECO:0007669"/>
    <property type="project" value="UniProtKB-SubCell"/>
</dbReference>
<dbReference type="GO" id="GO:0015293">
    <property type="term" value="F:symporter activity"/>
    <property type="evidence" value="ECO:0007669"/>
    <property type="project" value="InterPro"/>
</dbReference>
<dbReference type="GO" id="GO:0050380">
    <property type="term" value="F:undecaprenyl-diphosphatase activity"/>
    <property type="evidence" value="ECO:0007669"/>
    <property type="project" value="UniProtKB-UniRule"/>
</dbReference>
<dbReference type="GO" id="GO:0071555">
    <property type="term" value="P:cell wall organization"/>
    <property type="evidence" value="ECO:0007669"/>
    <property type="project" value="UniProtKB-KW"/>
</dbReference>
<dbReference type="GO" id="GO:0009252">
    <property type="term" value="P:peptidoglycan biosynthetic process"/>
    <property type="evidence" value="ECO:0007669"/>
    <property type="project" value="UniProtKB-KW"/>
</dbReference>
<dbReference type="GO" id="GO:0008360">
    <property type="term" value="P:regulation of cell shape"/>
    <property type="evidence" value="ECO:0007669"/>
    <property type="project" value="UniProtKB-KW"/>
</dbReference>
<dbReference type="GO" id="GO:0046677">
    <property type="term" value="P:response to antibiotic"/>
    <property type="evidence" value="ECO:0007669"/>
    <property type="project" value="UniProtKB-UniRule"/>
</dbReference>
<dbReference type="HAMAP" id="MF_01006">
    <property type="entry name" value="Undec_diphosphatase"/>
    <property type="match status" value="1"/>
</dbReference>
<dbReference type="InterPro" id="IPR036458">
    <property type="entry name" value="Na:dicarbo_symporter_sf"/>
</dbReference>
<dbReference type="InterPro" id="IPR003824">
    <property type="entry name" value="UppP"/>
</dbReference>
<dbReference type="PANTHER" id="PTHR30622">
    <property type="entry name" value="UNDECAPRENYL-DIPHOSPHATASE"/>
    <property type="match status" value="1"/>
</dbReference>
<dbReference type="PANTHER" id="PTHR30622:SF4">
    <property type="entry name" value="UNDECAPRENYL-DIPHOSPHATASE"/>
    <property type="match status" value="1"/>
</dbReference>
<dbReference type="Pfam" id="PF02673">
    <property type="entry name" value="BacA"/>
    <property type="match status" value="1"/>
</dbReference>
<dbReference type="SUPFAM" id="SSF118215">
    <property type="entry name" value="Proton glutamate symport protein"/>
    <property type="match status" value="1"/>
</dbReference>
<accession>B7IFS1</accession>
<sequence>MNHIVLGLIQGLTEFLPISSSGHLTLFSYLFNIEPNISNFAFLHLATLAAIIVFVWKEIVEILKGLFTLKKEYYSLVLKIIISTIPAAIFGFLFNSTIENSFSNLKIISFFFLVTAASLFVSDKLKGKKDFFNISYIDALIIGLFQMIAIFPGISRSGITLFGALTVGLEREKALKYSFLMGIPVILGAGILETSKIELNSYILISGLVAFLSGLLSLLILKKLTISKKLKIFSYYCILIAIIAFFVG</sequence>
<evidence type="ECO:0000255" key="1">
    <source>
        <dbReference type="HAMAP-Rule" id="MF_01006"/>
    </source>
</evidence>
<comment type="function">
    <text evidence="1">Catalyzes the dephosphorylation of undecaprenyl diphosphate (UPP). Confers resistance to bacitracin.</text>
</comment>
<comment type="catalytic activity">
    <reaction evidence="1">
        <text>di-trans,octa-cis-undecaprenyl diphosphate + H2O = di-trans,octa-cis-undecaprenyl phosphate + phosphate + H(+)</text>
        <dbReference type="Rhea" id="RHEA:28094"/>
        <dbReference type="ChEBI" id="CHEBI:15377"/>
        <dbReference type="ChEBI" id="CHEBI:15378"/>
        <dbReference type="ChEBI" id="CHEBI:43474"/>
        <dbReference type="ChEBI" id="CHEBI:58405"/>
        <dbReference type="ChEBI" id="CHEBI:60392"/>
        <dbReference type="EC" id="3.6.1.27"/>
    </reaction>
</comment>
<comment type="subcellular location">
    <subcellularLocation>
        <location evidence="1">Cell inner membrane</location>
        <topology evidence="1">Multi-pass membrane protein</topology>
    </subcellularLocation>
</comment>
<comment type="miscellaneous">
    <text>Bacitracin is thought to be involved in the inhibition of peptidoglycan synthesis by sequestering undecaprenyl diphosphate, thereby reducing the pool of lipid carrier available.</text>
</comment>
<comment type="similarity">
    <text evidence="1">Belongs to the UppP family.</text>
</comment>
<reference key="1">
    <citation type="journal article" date="2009" name="J. Bacteriol.">
        <title>The genome of Thermosipho africanus TCF52B: lateral genetic connections to the Firmicutes and Archaea.</title>
        <authorList>
            <person name="Nesboe C.L."/>
            <person name="Bapteste E."/>
            <person name="Curtis B."/>
            <person name="Dahle H."/>
            <person name="Lopez P."/>
            <person name="Macleod D."/>
            <person name="Dlutek M."/>
            <person name="Bowman S."/>
            <person name="Zhaxybayeva O."/>
            <person name="Birkeland N.-K."/>
            <person name="Doolittle W.F."/>
        </authorList>
    </citation>
    <scope>NUCLEOTIDE SEQUENCE [LARGE SCALE GENOMIC DNA]</scope>
    <source>
        <strain>TCF52B</strain>
    </source>
</reference>
<proteinExistence type="inferred from homology"/>
<feature type="chain" id="PRO_1000197417" description="Undecaprenyl-diphosphatase">
    <location>
        <begin position="1"/>
        <end position="248"/>
    </location>
</feature>
<feature type="transmembrane region" description="Helical" evidence="1">
    <location>
        <begin position="4"/>
        <end position="24"/>
    </location>
</feature>
<feature type="transmembrane region" description="Helical" evidence="1">
    <location>
        <begin position="40"/>
        <end position="60"/>
    </location>
</feature>
<feature type="transmembrane region" description="Helical" evidence="1">
    <location>
        <begin position="74"/>
        <end position="94"/>
    </location>
</feature>
<feature type="transmembrane region" description="Helical" evidence="1">
    <location>
        <begin position="101"/>
        <end position="121"/>
    </location>
</feature>
<feature type="transmembrane region" description="Helical" evidence="1">
    <location>
        <begin position="134"/>
        <end position="154"/>
    </location>
</feature>
<feature type="transmembrane region" description="Helical" evidence="1">
    <location>
        <begin position="174"/>
        <end position="194"/>
    </location>
</feature>
<feature type="transmembrane region" description="Helical" evidence="1">
    <location>
        <begin position="201"/>
        <end position="221"/>
    </location>
</feature>
<feature type="transmembrane region" description="Helical" evidence="1">
    <location>
        <begin position="228"/>
        <end position="248"/>
    </location>
</feature>